<keyword id="KW-0687">Ribonucleoprotein</keyword>
<keyword id="KW-0689">Ribosomal protein</keyword>
<keyword id="KW-0694">RNA-binding</keyword>
<keyword id="KW-0699">rRNA-binding</keyword>
<name>RS8_NITV9</name>
<feature type="chain" id="PRO_1000140544" description="Small ribosomal subunit protein uS8">
    <location>
        <begin position="1"/>
        <end position="126"/>
    </location>
</feature>
<reference key="1">
    <citation type="submission" date="2008-10" db="EMBL/GenBank/DDBJ databases">
        <title>Complete sequence of Desulfovibrio vulgaris str. 'Miyazaki F'.</title>
        <authorList>
            <person name="Lucas S."/>
            <person name="Copeland A."/>
            <person name="Lapidus A."/>
            <person name="Glavina del Rio T."/>
            <person name="Dalin E."/>
            <person name="Tice H."/>
            <person name="Bruce D."/>
            <person name="Goodwin L."/>
            <person name="Pitluck S."/>
            <person name="Sims D."/>
            <person name="Brettin T."/>
            <person name="Detter J.C."/>
            <person name="Han C."/>
            <person name="Larimer F."/>
            <person name="Land M."/>
            <person name="Hauser L."/>
            <person name="Kyrpides N."/>
            <person name="Mikhailova N."/>
            <person name="Hazen T.C."/>
            <person name="Richardson P."/>
        </authorList>
    </citation>
    <scope>NUCLEOTIDE SEQUENCE [LARGE SCALE GENOMIC DNA]</scope>
    <source>
        <strain>DSM 19637 / Miyazaki F</strain>
    </source>
</reference>
<dbReference type="EMBL" id="CP001197">
    <property type="protein sequence ID" value="ACL07054.1"/>
    <property type="molecule type" value="Genomic_DNA"/>
</dbReference>
<dbReference type="SMR" id="B8DNB0"/>
<dbReference type="STRING" id="883.DvMF_0093"/>
<dbReference type="KEGG" id="dvm:DvMF_0093"/>
<dbReference type="eggNOG" id="COG0096">
    <property type="taxonomic scope" value="Bacteria"/>
</dbReference>
<dbReference type="HOGENOM" id="CLU_098428_0_0_7"/>
<dbReference type="OrthoDB" id="9802617at2"/>
<dbReference type="GO" id="GO:1990904">
    <property type="term" value="C:ribonucleoprotein complex"/>
    <property type="evidence" value="ECO:0007669"/>
    <property type="project" value="UniProtKB-KW"/>
</dbReference>
<dbReference type="GO" id="GO:0005840">
    <property type="term" value="C:ribosome"/>
    <property type="evidence" value="ECO:0007669"/>
    <property type="project" value="UniProtKB-KW"/>
</dbReference>
<dbReference type="GO" id="GO:0019843">
    <property type="term" value="F:rRNA binding"/>
    <property type="evidence" value="ECO:0007669"/>
    <property type="project" value="UniProtKB-UniRule"/>
</dbReference>
<dbReference type="GO" id="GO:0003735">
    <property type="term" value="F:structural constituent of ribosome"/>
    <property type="evidence" value="ECO:0007669"/>
    <property type="project" value="InterPro"/>
</dbReference>
<dbReference type="GO" id="GO:0006412">
    <property type="term" value="P:translation"/>
    <property type="evidence" value="ECO:0007669"/>
    <property type="project" value="UniProtKB-UniRule"/>
</dbReference>
<dbReference type="FunFam" id="3.30.1370.30:FF:000002">
    <property type="entry name" value="30S ribosomal protein S8"/>
    <property type="match status" value="1"/>
</dbReference>
<dbReference type="FunFam" id="3.30.1490.10:FF:000001">
    <property type="entry name" value="30S ribosomal protein S8"/>
    <property type="match status" value="1"/>
</dbReference>
<dbReference type="Gene3D" id="3.30.1370.30">
    <property type="match status" value="1"/>
</dbReference>
<dbReference type="Gene3D" id="3.30.1490.10">
    <property type="match status" value="1"/>
</dbReference>
<dbReference type="HAMAP" id="MF_01302_B">
    <property type="entry name" value="Ribosomal_uS8_B"/>
    <property type="match status" value="1"/>
</dbReference>
<dbReference type="InterPro" id="IPR000630">
    <property type="entry name" value="Ribosomal_uS8"/>
</dbReference>
<dbReference type="InterPro" id="IPR047863">
    <property type="entry name" value="Ribosomal_uS8_CS"/>
</dbReference>
<dbReference type="InterPro" id="IPR035987">
    <property type="entry name" value="Ribosomal_uS8_sf"/>
</dbReference>
<dbReference type="NCBIfam" id="NF001109">
    <property type="entry name" value="PRK00136.1"/>
    <property type="match status" value="1"/>
</dbReference>
<dbReference type="PANTHER" id="PTHR11758">
    <property type="entry name" value="40S RIBOSOMAL PROTEIN S15A"/>
    <property type="match status" value="1"/>
</dbReference>
<dbReference type="Pfam" id="PF00410">
    <property type="entry name" value="Ribosomal_S8"/>
    <property type="match status" value="1"/>
</dbReference>
<dbReference type="SUPFAM" id="SSF56047">
    <property type="entry name" value="Ribosomal protein S8"/>
    <property type="match status" value="1"/>
</dbReference>
<dbReference type="PROSITE" id="PS00053">
    <property type="entry name" value="RIBOSOMAL_S8"/>
    <property type="match status" value="1"/>
</dbReference>
<proteinExistence type="inferred from homology"/>
<sequence>MLTDPIADMLTRIRNAHLALHKEVSVPRSKIKESIAAILKQEGYIEDVATEEAEIKISLKYFKGKPVISGLKRVSKPGRRVYVGSTDIPKVQNGLGICILSTSSGVLAGTQARDRKVGGELLCEIW</sequence>
<accession>B8DNB0</accession>
<comment type="function">
    <text evidence="1">One of the primary rRNA binding proteins, it binds directly to 16S rRNA central domain where it helps coordinate assembly of the platform of the 30S subunit.</text>
</comment>
<comment type="subunit">
    <text evidence="1">Part of the 30S ribosomal subunit. Contacts proteins S5 and S12.</text>
</comment>
<comment type="similarity">
    <text evidence="1">Belongs to the universal ribosomal protein uS8 family.</text>
</comment>
<evidence type="ECO:0000255" key="1">
    <source>
        <dbReference type="HAMAP-Rule" id="MF_01302"/>
    </source>
</evidence>
<evidence type="ECO:0000305" key="2"/>
<organism>
    <name type="scientific">Nitratidesulfovibrio vulgaris (strain DSM 19637 / Miyazaki F)</name>
    <name type="common">Desulfovibrio vulgaris</name>
    <dbReference type="NCBI Taxonomy" id="883"/>
    <lineage>
        <taxon>Bacteria</taxon>
        <taxon>Pseudomonadati</taxon>
        <taxon>Thermodesulfobacteriota</taxon>
        <taxon>Desulfovibrionia</taxon>
        <taxon>Desulfovibrionales</taxon>
        <taxon>Desulfovibrionaceae</taxon>
        <taxon>Nitratidesulfovibrio</taxon>
    </lineage>
</organism>
<protein>
    <recommendedName>
        <fullName evidence="1">Small ribosomal subunit protein uS8</fullName>
    </recommendedName>
    <alternativeName>
        <fullName evidence="2">30S ribosomal protein S8</fullName>
    </alternativeName>
</protein>
<gene>
    <name evidence="1" type="primary">rpsH</name>
    <name type="ordered locus">DvMF_0093</name>
</gene>